<dbReference type="EC" id="2.7.1.2"/>
<dbReference type="EMBL" id="AE005174">
    <property type="protein sequence ID" value="AAG57514.1"/>
    <property type="molecule type" value="Genomic_DNA"/>
</dbReference>
<dbReference type="EMBL" id="BA000007">
    <property type="protein sequence ID" value="BAB36691.1"/>
    <property type="molecule type" value="Genomic_DNA"/>
</dbReference>
<dbReference type="PIR" id="D91037">
    <property type="entry name" value="D91037"/>
</dbReference>
<dbReference type="PIR" id="F85881">
    <property type="entry name" value="F85881"/>
</dbReference>
<dbReference type="RefSeq" id="NP_311295.1">
    <property type="nucleotide sequence ID" value="NC_002695.1"/>
</dbReference>
<dbReference type="RefSeq" id="WP_000170346.1">
    <property type="nucleotide sequence ID" value="NZ_VOAI01000001.1"/>
</dbReference>
<dbReference type="PDB" id="1Q18">
    <property type="method" value="X-ray"/>
    <property type="resolution" value="2.36 A"/>
    <property type="chains" value="A/B=2-321"/>
</dbReference>
<dbReference type="PDB" id="1SZ2">
    <property type="method" value="X-ray"/>
    <property type="resolution" value="2.20 A"/>
    <property type="chains" value="A/B=2-321"/>
</dbReference>
<dbReference type="PDBsum" id="1Q18"/>
<dbReference type="PDBsum" id="1SZ2"/>
<dbReference type="SMR" id="P0A6V9"/>
<dbReference type="STRING" id="155864.Z3654"/>
<dbReference type="GeneID" id="75202543"/>
<dbReference type="GeneID" id="915629"/>
<dbReference type="KEGG" id="ece:Z3654"/>
<dbReference type="KEGG" id="ecs:ECs_3268"/>
<dbReference type="PATRIC" id="fig|386585.9.peg.3412"/>
<dbReference type="eggNOG" id="COG0837">
    <property type="taxonomic scope" value="Bacteria"/>
</dbReference>
<dbReference type="HOGENOM" id="CLU_042582_1_0_6"/>
<dbReference type="OMA" id="NNHWRLS"/>
<dbReference type="BRENDA" id="2.7.1.2">
    <property type="organism ID" value="2026"/>
</dbReference>
<dbReference type="EvolutionaryTrace" id="P0A6V9"/>
<dbReference type="Proteomes" id="UP000000558">
    <property type="component" value="Chromosome"/>
</dbReference>
<dbReference type="Proteomes" id="UP000002519">
    <property type="component" value="Chromosome"/>
</dbReference>
<dbReference type="GO" id="GO:0005829">
    <property type="term" value="C:cytosol"/>
    <property type="evidence" value="ECO:0007669"/>
    <property type="project" value="TreeGrafter"/>
</dbReference>
<dbReference type="GO" id="GO:0005524">
    <property type="term" value="F:ATP binding"/>
    <property type="evidence" value="ECO:0007669"/>
    <property type="project" value="UniProtKB-UniRule"/>
</dbReference>
<dbReference type="GO" id="GO:0005536">
    <property type="term" value="F:D-glucose binding"/>
    <property type="evidence" value="ECO:0007669"/>
    <property type="project" value="InterPro"/>
</dbReference>
<dbReference type="GO" id="GO:0004340">
    <property type="term" value="F:glucokinase activity"/>
    <property type="evidence" value="ECO:0007669"/>
    <property type="project" value="UniProtKB-UniRule"/>
</dbReference>
<dbReference type="GO" id="GO:0006096">
    <property type="term" value="P:glycolytic process"/>
    <property type="evidence" value="ECO:0007669"/>
    <property type="project" value="UniProtKB-UniRule"/>
</dbReference>
<dbReference type="CDD" id="cd24008">
    <property type="entry name" value="ASKHA_NBD_GLK"/>
    <property type="match status" value="1"/>
</dbReference>
<dbReference type="FunFam" id="3.30.420.40:FF:000045">
    <property type="entry name" value="Glucokinase"/>
    <property type="match status" value="1"/>
</dbReference>
<dbReference type="FunFam" id="3.40.367.20:FF:000002">
    <property type="entry name" value="Glucokinase"/>
    <property type="match status" value="1"/>
</dbReference>
<dbReference type="Gene3D" id="3.30.420.40">
    <property type="match status" value="1"/>
</dbReference>
<dbReference type="Gene3D" id="3.40.367.20">
    <property type="match status" value="1"/>
</dbReference>
<dbReference type="HAMAP" id="MF_00524">
    <property type="entry name" value="Glucokinase"/>
    <property type="match status" value="1"/>
</dbReference>
<dbReference type="InterPro" id="IPR043129">
    <property type="entry name" value="ATPase_NBD"/>
</dbReference>
<dbReference type="InterPro" id="IPR050201">
    <property type="entry name" value="Bacterial_glucokinase"/>
</dbReference>
<dbReference type="InterPro" id="IPR003836">
    <property type="entry name" value="Glucokinase"/>
</dbReference>
<dbReference type="NCBIfam" id="TIGR00749">
    <property type="entry name" value="glk"/>
    <property type="match status" value="1"/>
</dbReference>
<dbReference type="NCBIfam" id="NF001414">
    <property type="entry name" value="PRK00292.1-1"/>
    <property type="match status" value="1"/>
</dbReference>
<dbReference type="NCBIfam" id="NF001416">
    <property type="entry name" value="PRK00292.1-3"/>
    <property type="match status" value="1"/>
</dbReference>
<dbReference type="PANTHER" id="PTHR47690">
    <property type="entry name" value="GLUCOKINASE"/>
    <property type="match status" value="1"/>
</dbReference>
<dbReference type="PANTHER" id="PTHR47690:SF1">
    <property type="entry name" value="GLUCOKINASE"/>
    <property type="match status" value="1"/>
</dbReference>
<dbReference type="Pfam" id="PF02685">
    <property type="entry name" value="Glucokinase"/>
    <property type="match status" value="1"/>
</dbReference>
<dbReference type="SUPFAM" id="SSF53067">
    <property type="entry name" value="Actin-like ATPase domain"/>
    <property type="match status" value="1"/>
</dbReference>
<comment type="function">
    <text>Not highly important in E.coli as glucose is transported into the cell by the PTS system already as glucose 6-phosphate.</text>
</comment>
<comment type="catalytic activity">
    <reaction>
        <text>D-glucose + ATP = D-glucose 6-phosphate + ADP + H(+)</text>
        <dbReference type="Rhea" id="RHEA:17825"/>
        <dbReference type="ChEBI" id="CHEBI:4167"/>
        <dbReference type="ChEBI" id="CHEBI:15378"/>
        <dbReference type="ChEBI" id="CHEBI:30616"/>
        <dbReference type="ChEBI" id="CHEBI:61548"/>
        <dbReference type="ChEBI" id="CHEBI:456216"/>
        <dbReference type="EC" id="2.7.1.2"/>
    </reaction>
</comment>
<comment type="subcellular location">
    <subcellularLocation>
        <location evidence="1">Cytoplasm</location>
    </subcellularLocation>
</comment>
<comment type="similarity">
    <text evidence="3">Belongs to the bacterial glucokinase family.</text>
</comment>
<sequence>MTKYALVGDVGGTNARLALCDIASGEISQAKTYSGLDYPSLEAVIRVYLEEHKVEVKDGCIAIACPITGDWVAMTNHTWAFSIAEMKKNLGFSHLEIINDFTAVSMAIPMLKKEHLIQFGGAEPVEGKPIAVYGAGTGLGVAHLVHVDKRWVSLPGEGGHVDFAPNSEEEAIILEILRAEIGHVSAERVLSGPGLVNLYRAIVKADNRLPENLKPKDITERALADSCTDCRRALSLFCVIMGRFGGNLALNLGTFGGVFIAGGIVPRFLEFFKASGFRAAFEDKGRFKEYVHDIPVYLIVHDNPGLLGSGAHLRQTLGHIL</sequence>
<reference key="1">
    <citation type="journal article" date="2001" name="Nature">
        <title>Genome sequence of enterohaemorrhagic Escherichia coli O157:H7.</title>
        <authorList>
            <person name="Perna N.T."/>
            <person name="Plunkett G. III"/>
            <person name="Burland V."/>
            <person name="Mau B."/>
            <person name="Glasner J.D."/>
            <person name="Rose D.J."/>
            <person name="Mayhew G.F."/>
            <person name="Evans P.S."/>
            <person name="Gregor J."/>
            <person name="Kirkpatrick H.A."/>
            <person name="Posfai G."/>
            <person name="Hackett J."/>
            <person name="Klink S."/>
            <person name="Boutin A."/>
            <person name="Shao Y."/>
            <person name="Miller L."/>
            <person name="Grotbeck E.J."/>
            <person name="Davis N.W."/>
            <person name="Lim A."/>
            <person name="Dimalanta E.T."/>
            <person name="Potamousis K."/>
            <person name="Apodaca J."/>
            <person name="Anantharaman T.S."/>
            <person name="Lin J."/>
            <person name="Yen G."/>
            <person name="Schwartz D.C."/>
            <person name="Welch R.A."/>
            <person name="Blattner F.R."/>
        </authorList>
    </citation>
    <scope>NUCLEOTIDE SEQUENCE [LARGE SCALE GENOMIC DNA]</scope>
    <source>
        <strain>O157:H7 / EDL933 / ATCC 700927 / EHEC</strain>
    </source>
</reference>
<reference key="2">
    <citation type="journal article" date="2001" name="DNA Res.">
        <title>Complete genome sequence of enterohemorrhagic Escherichia coli O157:H7 and genomic comparison with a laboratory strain K-12.</title>
        <authorList>
            <person name="Hayashi T."/>
            <person name="Makino K."/>
            <person name="Ohnishi M."/>
            <person name="Kurokawa K."/>
            <person name="Ishii K."/>
            <person name="Yokoyama K."/>
            <person name="Han C.-G."/>
            <person name="Ohtsubo E."/>
            <person name="Nakayama K."/>
            <person name="Murata T."/>
            <person name="Tanaka M."/>
            <person name="Tobe T."/>
            <person name="Iida T."/>
            <person name="Takami H."/>
            <person name="Honda T."/>
            <person name="Sasakawa C."/>
            <person name="Ogasawara N."/>
            <person name="Yasunaga T."/>
            <person name="Kuhara S."/>
            <person name="Shiba T."/>
            <person name="Hattori M."/>
            <person name="Shinagawa H."/>
        </authorList>
    </citation>
    <scope>NUCLEOTIDE SEQUENCE [LARGE SCALE GENOMIC DNA]</scope>
    <source>
        <strain>O157:H7 / Sakai / RIMD 0509952 / EHEC</strain>
    </source>
</reference>
<reference key="3">
    <citation type="journal article" date="2004" name="J. Bacteriol.">
        <title>Crystal structures of Escherichia coli ATP-dependent glucokinase and its complex with glucose.</title>
        <authorList>
            <person name="Lunin V.V."/>
            <person name="Li Y."/>
            <person name="Schrag J.D."/>
            <person name="Iannuzzi P."/>
            <person name="Cygler M."/>
            <person name="Matte A."/>
        </authorList>
    </citation>
    <scope>X-RAY CRYSTALLOGRAPHY (2.2 ANGSTROMS)</scope>
</reference>
<organism>
    <name type="scientific">Escherichia coli O157:H7</name>
    <dbReference type="NCBI Taxonomy" id="83334"/>
    <lineage>
        <taxon>Bacteria</taxon>
        <taxon>Pseudomonadati</taxon>
        <taxon>Pseudomonadota</taxon>
        <taxon>Gammaproteobacteria</taxon>
        <taxon>Enterobacterales</taxon>
        <taxon>Enterobacteriaceae</taxon>
        <taxon>Escherichia</taxon>
    </lineage>
</organism>
<protein>
    <recommendedName>
        <fullName>Glucokinase</fullName>
        <ecNumber>2.7.1.2</ecNumber>
    </recommendedName>
    <alternativeName>
        <fullName>Glucose kinase</fullName>
    </alternativeName>
</protein>
<feature type="chain" id="PRO_0000215125" description="Glucokinase">
    <location>
        <begin position="1"/>
        <end position="321"/>
    </location>
</feature>
<feature type="binding site" evidence="2">
    <location>
        <begin position="8"/>
        <end position="13"/>
    </location>
    <ligand>
        <name>ATP</name>
        <dbReference type="ChEBI" id="CHEBI:30616"/>
    </ligand>
</feature>
<feature type="strand" evidence="4">
    <location>
        <begin position="4"/>
        <end position="11"/>
    </location>
</feature>
<feature type="strand" evidence="4">
    <location>
        <begin position="14"/>
        <end position="21"/>
    </location>
</feature>
<feature type="turn" evidence="4">
    <location>
        <begin position="22"/>
        <end position="24"/>
    </location>
</feature>
<feature type="strand" evidence="4">
    <location>
        <begin position="27"/>
        <end position="34"/>
    </location>
</feature>
<feature type="helix" evidence="4">
    <location>
        <begin position="35"/>
        <end position="37"/>
    </location>
</feature>
<feature type="helix" evidence="4">
    <location>
        <begin position="41"/>
        <end position="51"/>
    </location>
</feature>
<feature type="strand" evidence="4">
    <location>
        <begin position="58"/>
        <end position="65"/>
    </location>
</feature>
<feature type="strand" evidence="4">
    <location>
        <begin position="69"/>
        <end position="72"/>
    </location>
</feature>
<feature type="strand" evidence="4">
    <location>
        <begin position="75"/>
        <end position="77"/>
    </location>
</feature>
<feature type="helix" evidence="4">
    <location>
        <begin position="83"/>
        <end position="90"/>
    </location>
</feature>
<feature type="strand" evidence="4">
    <location>
        <begin position="93"/>
        <end position="99"/>
    </location>
</feature>
<feature type="helix" evidence="4">
    <location>
        <begin position="100"/>
        <end position="107"/>
    </location>
</feature>
<feature type="helix" evidence="4">
    <location>
        <begin position="108"/>
        <end position="110"/>
    </location>
</feature>
<feature type="helix" evidence="4">
    <location>
        <begin position="113"/>
        <end position="115"/>
    </location>
</feature>
<feature type="strand" evidence="4">
    <location>
        <begin position="116"/>
        <end position="118"/>
    </location>
</feature>
<feature type="strand" evidence="4">
    <location>
        <begin position="130"/>
        <end position="147"/>
    </location>
</feature>
<feature type="strand" evidence="4">
    <location>
        <begin position="150"/>
        <end position="155"/>
    </location>
</feature>
<feature type="helix" evidence="4">
    <location>
        <begin position="158"/>
        <end position="160"/>
    </location>
</feature>
<feature type="helix" evidence="4">
    <location>
        <begin position="168"/>
        <end position="180"/>
    </location>
</feature>
<feature type="strand" evidence="4">
    <location>
        <begin position="181"/>
        <end position="183"/>
    </location>
</feature>
<feature type="helix" evidence="4">
    <location>
        <begin position="186"/>
        <end position="188"/>
    </location>
</feature>
<feature type="helix" evidence="4">
    <location>
        <begin position="192"/>
        <end position="205"/>
    </location>
</feature>
<feature type="helix" evidence="4">
    <location>
        <begin position="215"/>
        <end position="224"/>
    </location>
</feature>
<feature type="helix" evidence="4">
    <location>
        <begin position="228"/>
        <end position="252"/>
    </location>
</feature>
<feature type="strand" evidence="4">
    <location>
        <begin position="257"/>
        <end position="261"/>
    </location>
</feature>
<feature type="strand" evidence="4">
    <location>
        <begin position="263"/>
        <end position="265"/>
    </location>
</feature>
<feature type="helix" evidence="4">
    <location>
        <begin position="266"/>
        <end position="268"/>
    </location>
</feature>
<feature type="helix" evidence="4">
    <location>
        <begin position="269"/>
        <end position="274"/>
    </location>
</feature>
<feature type="helix" evidence="4">
    <location>
        <begin position="277"/>
        <end position="282"/>
    </location>
</feature>
<feature type="helix" evidence="4">
    <location>
        <begin position="285"/>
        <end position="287"/>
    </location>
</feature>
<feature type="helix" evidence="4">
    <location>
        <begin position="288"/>
        <end position="291"/>
    </location>
</feature>
<feature type="strand" evidence="4">
    <location>
        <begin position="296"/>
        <end position="299"/>
    </location>
</feature>
<feature type="helix" evidence="4">
    <location>
        <begin position="304"/>
        <end position="316"/>
    </location>
</feature>
<accession>P0A6V9</accession>
<accession>P46880</accession>
<accession>P78276</accession>
<evidence type="ECO:0000250" key="1"/>
<evidence type="ECO:0000255" key="2"/>
<evidence type="ECO:0000305" key="3"/>
<evidence type="ECO:0007829" key="4">
    <source>
        <dbReference type="PDB" id="1SZ2"/>
    </source>
</evidence>
<proteinExistence type="evidence at protein level"/>
<keyword id="KW-0002">3D-structure</keyword>
<keyword id="KW-0067">ATP-binding</keyword>
<keyword id="KW-0963">Cytoplasm</keyword>
<keyword id="KW-0324">Glycolysis</keyword>
<keyword id="KW-0418">Kinase</keyword>
<keyword id="KW-0547">Nucleotide-binding</keyword>
<keyword id="KW-1185">Reference proteome</keyword>
<keyword id="KW-0808">Transferase</keyword>
<gene>
    <name type="primary">glk</name>
    <name type="ordered locus">Z3654</name>
    <name type="ordered locus">ECs3268</name>
</gene>
<name>GLK_ECO57</name>